<gene>
    <name evidence="1" type="primary">mutS2</name>
    <name evidence="1" type="synonym">rqcU</name>
    <name type="ordered locus">SUB1560</name>
</gene>
<name>MUTS2_STRU0</name>
<keyword id="KW-0067">ATP-binding</keyword>
<keyword id="KW-0238">DNA-binding</keyword>
<keyword id="KW-0255">Endonuclease</keyword>
<keyword id="KW-0378">Hydrolase</keyword>
<keyword id="KW-0540">Nuclease</keyword>
<keyword id="KW-0547">Nucleotide-binding</keyword>
<keyword id="KW-1185">Reference proteome</keyword>
<keyword id="KW-0694">RNA-binding</keyword>
<keyword id="KW-0699">rRNA-binding</keyword>
<evidence type="ECO:0000255" key="1">
    <source>
        <dbReference type="HAMAP-Rule" id="MF_00092"/>
    </source>
</evidence>
<feature type="chain" id="PRO_1000118569" description="Endonuclease MutS2">
    <location>
        <begin position="1"/>
        <end position="777"/>
    </location>
</feature>
<feature type="domain" description="Smr" evidence="1">
    <location>
        <begin position="702"/>
        <end position="777"/>
    </location>
</feature>
<feature type="binding site" evidence="1">
    <location>
        <begin position="328"/>
        <end position="335"/>
    </location>
    <ligand>
        <name>ATP</name>
        <dbReference type="ChEBI" id="CHEBI:30616"/>
    </ligand>
</feature>
<organism>
    <name type="scientific">Streptococcus uberis (strain ATCC BAA-854 / 0140J)</name>
    <dbReference type="NCBI Taxonomy" id="218495"/>
    <lineage>
        <taxon>Bacteria</taxon>
        <taxon>Bacillati</taxon>
        <taxon>Bacillota</taxon>
        <taxon>Bacilli</taxon>
        <taxon>Lactobacillales</taxon>
        <taxon>Streptococcaceae</taxon>
        <taxon>Streptococcus</taxon>
    </lineage>
</organism>
<proteinExistence type="inferred from homology"/>
<reference key="1">
    <citation type="journal article" date="2009" name="BMC Genomics">
        <title>Evidence for niche adaptation in the genome of the bovine pathogen Streptococcus uberis.</title>
        <authorList>
            <person name="Ward P.N."/>
            <person name="Holden M.T.G."/>
            <person name="Leigh J.A."/>
            <person name="Lennard N."/>
            <person name="Bignell A."/>
            <person name="Barron A."/>
            <person name="Clark L."/>
            <person name="Quail M.A."/>
            <person name="Woodward J."/>
            <person name="Barrell B.G."/>
            <person name="Egan S.A."/>
            <person name="Field T.R."/>
            <person name="Maskell D."/>
            <person name="Kehoe M."/>
            <person name="Dowson C.G."/>
            <person name="Chanter N."/>
            <person name="Whatmore A.M."/>
            <person name="Bentley S.D."/>
            <person name="Parkhill J."/>
        </authorList>
    </citation>
    <scope>NUCLEOTIDE SEQUENCE [LARGE SCALE GENOMIC DNA]</scope>
    <source>
        <strain>ATCC BAA-854 / 0140J</strain>
    </source>
</reference>
<comment type="function">
    <text evidence="1">Endonuclease that is involved in the suppression of homologous recombination and thus may have a key role in the control of bacterial genetic diversity.</text>
</comment>
<comment type="function">
    <text evidence="1">Acts as a ribosome collision sensor, splitting the ribosome into its 2 subunits. Detects stalled/collided 70S ribosomes which it binds and splits by an ATP-hydrolysis driven conformational change. Acts upstream of the ribosome quality control system (RQC), a ribosome-associated complex that mediates the extraction of incompletely synthesized nascent chains from stalled ribosomes and their subsequent degradation. Probably generates substrates for RQC.</text>
</comment>
<comment type="subunit">
    <text evidence="1">Homodimer. Binds to stalled ribosomes, contacting rRNA.</text>
</comment>
<comment type="similarity">
    <text evidence="1">Belongs to the DNA mismatch repair MutS family. MutS2 subfamily.</text>
</comment>
<protein>
    <recommendedName>
        <fullName evidence="1">Endonuclease MutS2</fullName>
        <ecNumber evidence="1">3.1.-.-</ecNumber>
    </recommendedName>
    <alternativeName>
        <fullName evidence="1">Ribosome-associated protein quality control-upstream factor</fullName>
        <shortName evidence="1">RQC-upstream factor</shortName>
        <shortName evidence="1">RqcU</shortName>
        <ecNumber evidence="1">3.6.4.-</ecNumber>
    </alternativeName>
</protein>
<dbReference type="EC" id="3.1.-.-" evidence="1"/>
<dbReference type="EC" id="3.6.4.-" evidence="1"/>
<dbReference type="EMBL" id="AM946015">
    <property type="protein sequence ID" value="CAR43343.1"/>
    <property type="molecule type" value="Genomic_DNA"/>
</dbReference>
<dbReference type="RefSeq" id="WP_015911866.1">
    <property type="nucleotide sequence ID" value="NC_012004.1"/>
</dbReference>
<dbReference type="SMR" id="B9DVK7"/>
<dbReference type="STRING" id="218495.SUB1560"/>
<dbReference type="KEGG" id="sub:SUB1560"/>
<dbReference type="eggNOG" id="COG1193">
    <property type="taxonomic scope" value="Bacteria"/>
</dbReference>
<dbReference type="HOGENOM" id="CLU_011252_2_1_9"/>
<dbReference type="OrthoDB" id="9808166at2"/>
<dbReference type="Proteomes" id="UP000000449">
    <property type="component" value="Chromosome"/>
</dbReference>
<dbReference type="GO" id="GO:0005524">
    <property type="term" value="F:ATP binding"/>
    <property type="evidence" value="ECO:0007669"/>
    <property type="project" value="UniProtKB-UniRule"/>
</dbReference>
<dbReference type="GO" id="GO:0016887">
    <property type="term" value="F:ATP hydrolysis activity"/>
    <property type="evidence" value="ECO:0007669"/>
    <property type="project" value="InterPro"/>
</dbReference>
<dbReference type="GO" id="GO:0140664">
    <property type="term" value="F:ATP-dependent DNA damage sensor activity"/>
    <property type="evidence" value="ECO:0007669"/>
    <property type="project" value="InterPro"/>
</dbReference>
<dbReference type="GO" id="GO:0004519">
    <property type="term" value="F:endonuclease activity"/>
    <property type="evidence" value="ECO:0007669"/>
    <property type="project" value="UniProtKB-UniRule"/>
</dbReference>
<dbReference type="GO" id="GO:0030983">
    <property type="term" value="F:mismatched DNA binding"/>
    <property type="evidence" value="ECO:0007669"/>
    <property type="project" value="InterPro"/>
</dbReference>
<dbReference type="GO" id="GO:0043023">
    <property type="term" value="F:ribosomal large subunit binding"/>
    <property type="evidence" value="ECO:0007669"/>
    <property type="project" value="UniProtKB-UniRule"/>
</dbReference>
<dbReference type="GO" id="GO:0019843">
    <property type="term" value="F:rRNA binding"/>
    <property type="evidence" value="ECO:0007669"/>
    <property type="project" value="UniProtKB-UniRule"/>
</dbReference>
<dbReference type="GO" id="GO:0006298">
    <property type="term" value="P:mismatch repair"/>
    <property type="evidence" value="ECO:0007669"/>
    <property type="project" value="InterPro"/>
</dbReference>
<dbReference type="GO" id="GO:0045910">
    <property type="term" value="P:negative regulation of DNA recombination"/>
    <property type="evidence" value="ECO:0007669"/>
    <property type="project" value="InterPro"/>
</dbReference>
<dbReference type="GO" id="GO:0072344">
    <property type="term" value="P:rescue of stalled ribosome"/>
    <property type="evidence" value="ECO:0007669"/>
    <property type="project" value="UniProtKB-UniRule"/>
</dbReference>
<dbReference type="CDD" id="cd03280">
    <property type="entry name" value="ABC_MutS2"/>
    <property type="match status" value="1"/>
</dbReference>
<dbReference type="FunFam" id="3.30.1370.110:FF:000004">
    <property type="entry name" value="Endonuclease MutS2"/>
    <property type="match status" value="1"/>
</dbReference>
<dbReference type="FunFam" id="3.40.50.300:FF:000830">
    <property type="entry name" value="Endonuclease MutS2"/>
    <property type="match status" value="1"/>
</dbReference>
<dbReference type="Gene3D" id="3.30.1370.110">
    <property type="match status" value="1"/>
</dbReference>
<dbReference type="Gene3D" id="3.40.50.300">
    <property type="entry name" value="P-loop containing nucleotide triphosphate hydrolases"/>
    <property type="match status" value="1"/>
</dbReference>
<dbReference type="HAMAP" id="MF_00092">
    <property type="entry name" value="MutS2"/>
    <property type="match status" value="1"/>
</dbReference>
<dbReference type="InterPro" id="IPR000432">
    <property type="entry name" value="DNA_mismatch_repair_MutS_C"/>
</dbReference>
<dbReference type="InterPro" id="IPR007696">
    <property type="entry name" value="DNA_mismatch_repair_MutS_core"/>
</dbReference>
<dbReference type="InterPro" id="IPR036187">
    <property type="entry name" value="DNA_mismatch_repair_MutS_sf"/>
</dbReference>
<dbReference type="InterPro" id="IPR046893">
    <property type="entry name" value="MSSS"/>
</dbReference>
<dbReference type="InterPro" id="IPR045076">
    <property type="entry name" value="MutS"/>
</dbReference>
<dbReference type="InterPro" id="IPR005747">
    <property type="entry name" value="MutS2"/>
</dbReference>
<dbReference type="InterPro" id="IPR027417">
    <property type="entry name" value="P-loop_NTPase"/>
</dbReference>
<dbReference type="InterPro" id="IPR002625">
    <property type="entry name" value="Smr_dom"/>
</dbReference>
<dbReference type="InterPro" id="IPR036063">
    <property type="entry name" value="Smr_dom_sf"/>
</dbReference>
<dbReference type="NCBIfam" id="TIGR01069">
    <property type="entry name" value="mutS2"/>
    <property type="match status" value="1"/>
</dbReference>
<dbReference type="PANTHER" id="PTHR48466:SF2">
    <property type="entry name" value="OS10G0509000 PROTEIN"/>
    <property type="match status" value="1"/>
</dbReference>
<dbReference type="PANTHER" id="PTHR48466">
    <property type="entry name" value="OS10G0509000 PROTEIN-RELATED"/>
    <property type="match status" value="1"/>
</dbReference>
<dbReference type="Pfam" id="PF20297">
    <property type="entry name" value="MSSS"/>
    <property type="match status" value="1"/>
</dbReference>
<dbReference type="Pfam" id="PF00488">
    <property type="entry name" value="MutS_V"/>
    <property type="match status" value="1"/>
</dbReference>
<dbReference type="Pfam" id="PF01713">
    <property type="entry name" value="Smr"/>
    <property type="match status" value="1"/>
</dbReference>
<dbReference type="PIRSF" id="PIRSF005814">
    <property type="entry name" value="MutS_YshD"/>
    <property type="match status" value="1"/>
</dbReference>
<dbReference type="SMART" id="SM00534">
    <property type="entry name" value="MUTSac"/>
    <property type="match status" value="1"/>
</dbReference>
<dbReference type="SMART" id="SM00533">
    <property type="entry name" value="MUTSd"/>
    <property type="match status" value="1"/>
</dbReference>
<dbReference type="SMART" id="SM00463">
    <property type="entry name" value="SMR"/>
    <property type="match status" value="1"/>
</dbReference>
<dbReference type="SUPFAM" id="SSF48334">
    <property type="entry name" value="DNA repair protein MutS, domain III"/>
    <property type="match status" value="1"/>
</dbReference>
<dbReference type="SUPFAM" id="SSF52540">
    <property type="entry name" value="P-loop containing nucleoside triphosphate hydrolases"/>
    <property type="match status" value="1"/>
</dbReference>
<dbReference type="SUPFAM" id="SSF160443">
    <property type="entry name" value="SMR domain-like"/>
    <property type="match status" value="1"/>
</dbReference>
<dbReference type="PROSITE" id="PS00486">
    <property type="entry name" value="DNA_MISMATCH_REPAIR_2"/>
    <property type="match status" value="1"/>
</dbReference>
<dbReference type="PROSITE" id="PS50828">
    <property type="entry name" value="SMR"/>
    <property type="match status" value="1"/>
</dbReference>
<accession>B9DVK7</accession>
<sequence length="777" mass="87925">MNQKILEQLEFQKVKEQFQPYLQTAQGIQELRLLEPSNHYDKISDYFKEIAEMATIFVENHHFSIGNLRDVSESMRRLELEADLNIQELLDIKKLLLVSGEISRFYQDLENVDLQVLKRIFEKIEVFPQLQGSLQAVNDAAFIENFASPELDRLRRQIAENERYSRQLLQDILKKNADYLSESLIASRNGKSVLPVKNTFRHRVSGVVHDISASGNTVYIEPRALVQVNEEMTQLLADERHEIARILKELSQLLRPHSRALANNAWLLGHLDFVRAKYHYLVNNKATIPKISKDKNIQLLNVRHPLLKNPVANDLHFADDLAVIVITGPNTGGKTIMLKTLGLAQLMGQSGLPILADEGSKIAVFDAIYADIGDEQSIEQSLSTFSSHMTHIVDILEESNSNSLVLFDELGAGTDPQEGASLAMAILEQLRLTNIKTMATTHYPELKAYGIESDYVENASMEFDSQSLKPTYRFMQGVPGRSNAFEIARRLGLAETIVKEAEQMTDTDSDVNRIIEELERQTLSSRRRLDHIREVEQENIKFNRAVKKLYNEFSLAKDKEIEKASQEAQAIVELALTESEEILSKLHEKAELKPHEIIEAKSKLKSLVPQRDLSKNKVLKKAKKLREPRIGDDIIVSAYGQRGTLIGQVKGNKWEAQVGLIKMTLKEDEFQLVKVEAEAQKPKKQSINMVKKANQNGPRARLDLRGKRYEEAMQELDAFIDQALVNNMSQVDIIHGIGTGVIREAVTKYLRRHKHVKSFAYAPQNAGGSGCTIATLG</sequence>